<proteinExistence type="inferred from homology"/>
<keyword id="KW-1003">Cell membrane</keyword>
<keyword id="KW-0472">Membrane</keyword>
<keyword id="KW-1185">Reference proteome</keyword>
<protein>
    <recommendedName>
        <fullName evidence="1">Putative membrane protein insertion efficiency factor</fullName>
    </recommendedName>
</protein>
<name>YIDD_DEIRA</name>
<comment type="function">
    <text evidence="1">Could be involved in insertion of integral membrane proteins into the membrane.</text>
</comment>
<comment type="subcellular location">
    <subcellularLocation>
        <location evidence="1">Cell membrane</location>
        <topology evidence="1">Peripheral membrane protein</topology>
        <orientation evidence="1">Cytoplasmic side</orientation>
    </subcellularLocation>
</comment>
<comment type="similarity">
    <text evidence="1">Belongs to the UPF0161 family.</text>
</comment>
<reference key="1">
    <citation type="journal article" date="1999" name="Science">
        <title>Genome sequence of the radioresistant bacterium Deinococcus radiodurans R1.</title>
        <authorList>
            <person name="White O."/>
            <person name="Eisen J.A."/>
            <person name="Heidelberg J.F."/>
            <person name="Hickey E.K."/>
            <person name="Peterson J.D."/>
            <person name="Dodson R.J."/>
            <person name="Haft D.H."/>
            <person name="Gwinn M.L."/>
            <person name="Nelson W.C."/>
            <person name="Richardson D.L."/>
            <person name="Moffat K.S."/>
            <person name="Qin H."/>
            <person name="Jiang L."/>
            <person name="Pamphile W."/>
            <person name="Crosby M."/>
            <person name="Shen M."/>
            <person name="Vamathevan J.J."/>
            <person name="Lam P."/>
            <person name="McDonald L.A."/>
            <person name="Utterback T.R."/>
            <person name="Zalewski C."/>
            <person name="Makarova K.S."/>
            <person name="Aravind L."/>
            <person name="Daly M.J."/>
            <person name="Minton K.W."/>
            <person name="Fleischmann R.D."/>
            <person name="Ketchum K.A."/>
            <person name="Nelson K.E."/>
            <person name="Salzberg S.L."/>
            <person name="Smith H.O."/>
            <person name="Venter J.C."/>
            <person name="Fraser C.M."/>
        </authorList>
    </citation>
    <scope>NUCLEOTIDE SEQUENCE [LARGE SCALE GENOMIC DNA]</scope>
    <source>
        <strain>ATCC 13939 / DSM 20539 / JCM 16871 / CCUG 27074 / LMG 4051 / NBRC 15346 / NCIMB 9279 / VKM B-1422 / R1</strain>
    </source>
</reference>
<accession>Q9RSH4</accession>
<sequence length="96" mass="10628">MSAAPLVRAVRWYQRVLSPRKPAPTCRFSPTCSEYAAQALDRHGALKGGWLALWRVLRCNPLVPGGFDPVPEHFPARHPRPQGSPPTDHPPTDQPS</sequence>
<feature type="chain" id="PRO_0000171819" description="Putative membrane protein insertion efficiency factor">
    <location>
        <begin position="1"/>
        <end position="96"/>
    </location>
</feature>
<feature type="region of interest" description="Disordered" evidence="2">
    <location>
        <begin position="68"/>
        <end position="96"/>
    </location>
</feature>
<feature type="compositionally biased region" description="Pro residues" evidence="2">
    <location>
        <begin position="82"/>
        <end position="96"/>
    </location>
</feature>
<evidence type="ECO:0000255" key="1">
    <source>
        <dbReference type="HAMAP-Rule" id="MF_00386"/>
    </source>
</evidence>
<evidence type="ECO:0000256" key="2">
    <source>
        <dbReference type="SAM" id="MobiDB-lite"/>
    </source>
</evidence>
<gene>
    <name type="ordered locus">DR_2150</name>
</gene>
<dbReference type="EMBL" id="AE000513">
    <property type="protein sequence ID" value="AAF11698.1"/>
    <property type="molecule type" value="Genomic_DNA"/>
</dbReference>
<dbReference type="PIR" id="A75308">
    <property type="entry name" value="A75308"/>
</dbReference>
<dbReference type="RefSeq" id="NP_295873.1">
    <property type="nucleotide sequence ID" value="NC_001263.1"/>
</dbReference>
<dbReference type="RefSeq" id="WP_010888781.1">
    <property type="nucleotide sequence ID" value="NC_001263.1"/>
</dbReference>
<dbReference type="FunCoup" id="Q9RSH4">
    <property type="interactions" value="255"/>
</dbReference>
<dbReference type="STRING" id="243230.DR_2150"/>
<dbReference type="PaxDb" id="243230-DR_2150"/>
<dbReference type="EnsemblBacteria" id="AAF11698">
    <property type="protein sequence ID" value="AAF11698"/>
    <property type="gene ID" value="DR_2150"/>
</dbReference>
<dbReference type="GeneID" id="69518391"/>
<dbReference type="KEGG" id="dra:DR_2150"/>
<dbReference type="PATRIC" id="fig|243230.17.peg.2375"/>
<dbReference type="eggNOG" id="COG0759">
    <property type="taxonomic scope" value="Bacteria"/>
</dbReference>
<dbReference type="HOGENOM" id="CLU_144811_5_1_0"/>
<dbReference type="InParanoid" id="Q9RSH4"/>
<dbReference type="OrthoDB" id="9801753at2"/>
<dbReference type="Proteomes" id="UP000002524">
    <property type="component" value="Chromosome 1"/>
</dbReference>
<dbReference type="GO" id="GO:0005886">
    <property type="term" value="C:plasma membrane"/>
    <property type="evidence" value="ECO:0007669"/>
    <property type="project" value="UniProtKB-SubCell"/>
</dbReference>
<dbReference type="HAMAP" id="MF_00386">
    <property type="entry name" value="UPF0161_YidD"/>
    <property type="match status" value="1"/>
</dbReference>
<dbReference type="InterPro" id="IPR002696">
    <property type="entry name" value="Membr_insert_effic_factor_YidD"/>
</dbReference>
<dbReference type="NCBIfam" id="TIGR00278">
    <property type="entry name" value="membrane protein insertion efficiency factor YidD"/>
    <property type="match status" value="1"/>
</dbReference>
<dbReference type="PANTHER" id="PTHR33383">
    <property type="entry name" value="MEMBRANE PROTEIN INSERTION EFFICIENCY FACTOR-RELATED"/>
    <property type="match status" value="1"/>
</dbReference>
<dbReference type="PANTHER" id="PTHR33383:SF1">
    <property type="entry name" value="MEMBRANE PROTEIN INSERTION EFFICIENCY FACTOR-RELATED"/>
    <property type="match status" value="1"/>
</dbReference>
<dbReference type="Pfam" id="PF01809">
    <property type="entry name" value="YidD"/>
    <property type="match status" value="1"/>
</dbReference>
<dbReference type="SMART" id="SM01234">
    <property type="entry name" value="Haemolytic"/>
    <property type="match status" value="1"/>
</dbReference>
<organism>
    <name type="scientific">Deinococcus radiodurans (strain ATCC 13939 / DSM 20539 / JCM 16871 / CCUG 27074 / LMG 4051 / NBRC 15346 / NCIMB 9279 / VKM B-1422 / R1)</name>
    <dbReference type="NCBI Taxonomy" id="243230"/>
    <lineage>
        <taxon>Bacteria</taxon>
        <taxon>Thermotogati</taxon>
        <taxon>Deinococcota</taxon>
        <taxon>Deinococci</taxon>
        <taxon>Deinococcales</taxon>
        <taxon>Deinococcaceae</taxon>
        <taxon>Deinococcus</taxon>
    </lineage>
</organism>